<feature type="chain" id="PRO_1000127922" description="Small ribosomal subunit protein uS19">
    <location>
        <begin position="1"/>
        <end position="91"/>
    </location>
</feature>
<keyword id="KW-1185">Reference proteome</keyword>
<keyword id="KW-0687">Ribonucleoprotein</keyword>
<keyword id="KW-0689">Ribosomal protein</keyword>
<keyword id="KW-0694">RNA-binding</keyword>
<keyword id="KW-0699">rRNA-binding</keyword>
<sequence>MARSIKKGPYIAHHLLKKIDAINESGSKNTIKTWSRSSTITPEFVGHTLAVHNGNKFIPVFVTENMVGHKLGEFSPTRTFKGHTKKNKNKK</sequence>
<accession>B3EUL9</accession>
<reference key="1">
    <citation type="journal article" date="2010" name="J. Bacteriol.">
        <title>The genome of the amoeba symbiont 'Candidatus Amoebophilus asiaticus' reveals common mechanisms for host cell interaction among amoeba-associated bacteria.</title>
        <authorList>
            <person name="Schmitz-Esser S."/>
            <person name="Tischler P."/>
            <person name="Arnold R."/>
            <person name="Montanaro J."/>
            <person name="Wagner M."/>
            <person name="Rattei T."/>
            <person name="Horn M."/>
        </authorList>
    </citation>
    <scope>NUCLEOTIDE SEQUENCE [LARGE SCALE GENOMIC DNA]</scope>
    <source>
        <strain>5a2</strain>
    </source>
</reference>
<name>RS19_AMOA5</name>
<organism>
    <name type="scientific">Amoebophilus asiaticus (strain 5a2)</name>
    <dbReference type="NCBI Taxonomy" id="452471"/>
    <lineage>
        <taxon>Bacteria</taxon>
        <taxon>Pseudomonadati</taxon>
        <taxon>Bacteroidota</taxon>
        <taxon>Cytophagia</taxon>
        <taxon>Cytophagales</taxon>
        <taxon>Amoebophilaceae</taxon>
        <taxon>Candidatus Amoebophilus</taxon>
    </lineage>
</organism>
<protein>
    <recommendedName>
        <fullName evidence="1">Small ribosomal subunit protein uS19</fullName>
    </recommendedName>
    <alternativeName>
        <fullName evidence="2">30S ribosomal protein S19</fullName>
    </alternativeName>
</protein>
<proteinExistence type="inferred from homology"/>
<dbReference type="EMBL" id="CP001102">
    <property type="protein sequence ID" value="ACE05638.1"/>
    <property type="molecule type" value="Genomic_DNA"/>
</dbReference>
<dbReference type="RefSeq" id="WP_012472403.1">
    <property type="nucleotide sequence ID" value="NC_010830.1"/>
</dbReference>
<dbReference type="SMR" id="B3EUL9"/>
<dbReference type="STRING" id="452471.Aasi_0193"/>
<dbReference type="KEGG" id="aas:Aasi_0193"/>
<dbReference type="eggNOG" id="COG0185">
    <property type="taxonomic scope" value="Bacteria"/>
</dbReference>
<dbReference type="HOGENOM" id="CLU_144911_0_1_10"/>
<dbReference type="OrthoDB" id="9797833at2"/>
<dbReference type="Proteomes" id="UP000001227">
    <property type="component" value="Chromosome"/>
</dbReference>
<dbReference type="GO" id="GO:0005737">
    <property type="term" value="C:cytoplasm"/>
    <property type="evidence" value="ECO:0007669"/>
    <property type="project" value="UniProtKB-ARBA"/>
</dbReference>
<dbReference type="GO" id="GO:0015935">
    <property type="term" value="C:small ribosomal subunit"/>
    <property type="evidence" value="ECO:0007669"/>
    <property type="project" value="InterPro"/>
</dbReference>
<dbReference type="GO" id="GO:0019843">
    <property type="term" value="F:rRNA binding"/>
    <property type="evidence" value="ECO:0007669"/>
    <property type="project" value="UniProtKB-UniRule"/>
</dbReference>
<dbReference type="GO" id="GO:0003735">
    <property type="term" value="F:structural constituent of ribosome"/>
    <property type="evidence" value="ECO:0007669"/>
    <property type="project" value="InterPro"/>
</dbReference>
<dbReference type="GO" id="GO:0000028">
    <property type="term" value="P:ribosomal small subunit assembly"/>
    <property type="evidence" value="ECO:0007669"/>
    <property type="project" value="TreeGrafter"/>
</dbReference>
<dbReference type="GO" id="GO:0006412">
    <property type="term" value="P:translation"/>
    <property type="evidence" value="ECO:0007669"/>
    <property type="project" value="UniProtKB-UniRule"/>
</dbReference>
<dbReference type="FunFam" id="3.30.860.10:FF:000001">
    <property type="entry name" value="30S ribosomal protein S19"/>
    <property type="match status" value="1"/>
</dbReference>
<dbReference type="Gene3D" id="3.30.860.10">
    <property type="entry name" value="30s Ribosomal Protein S19, Chain A"/>
    <property type="match status" value="1"/>
</dbReference>
<dbReference type="HAMAP" id="MF_00531">
    <property type="entry name" value="Ribosomal_uS19"/>
    <property type="match status" value="1"/>
</dbReference>
<dbReference type="InterPro" id="IPR002222">
    <property type="entry name" value="Ribosomal_uS19"/>
</dbReference>
<dbReference type="InterPro" id="IPR005732">
    <property type="entry name" value="Ribosomal_uS19_bac-type"/>
</dbReference>
<dbReference type="InterPro" id="IPR020934">
    <property type="entry name" value="Ribosomal_uS19_CS"/>
</dbReference>
<dbReference type="InterPro" id="IPR023575">
    <property type="entry name" value="Ribosomal_uS19_SF"/>
</dbReference>
<dbReference type="NCBIfam" id="TIGR01050">
    <property type="entry name" value="rpsS_bact"/>
    <property type="match status" value="1"/>
</dbReference>
<dbReference type="PANTHER" id="PTHR11880">
    <property type="entry name" value="RIBOSOMAL PROTEIN S19P FAMILY MEMBER"/>
    <property type="match status" value="1"/>
</dbReference>
<dbReference type="PANTHER" id="PTHR11880:SF8">
    <property type="entry name" value="SMALL RIBOSOMAL SUBUNIT PROTEIN US19M"/>
    <property type="match status" value="1"/>
</dbReference>
<dbReference type="Pfam" id="PF00203">
    <property type="entry name" value="Ribosomal_S19"/>
    <property type="match status" value="1"/>
</dbReference>
<dbReference type="PIRSF" id="PIRSF002144">
    <property type="entry name" value="Ribosomal_S19"/>
    <property type="match status" value="1"/>
</dbReference>
<dbReference type="PRINTS" id="PR00975">
    <property type="entry name" value="RIBOSOMALS19"/>
</dbReference>
<dbReference type="SUPFAM" id="SSF54570">
    <property type="entry name" value="Ribosomal protein S19"/>
    <property type="match status" value="1"/>
</dbReference>
<dbReference type="PROSITE" id="PS00323">
    <property type="entry name" value="RIBOSOMAL_S19"/>
    <property type="match status" value="1"/>
</dbReference>
<gene>
    <name evidence="1" type="primary">rpsS</name>
    <name type="ordered locus">Aasi_0193</name>
</gene>
<comment type="function">
    <text evidence="1">Protein S19 forms a complex with S13 that binds strongly to the 16S ribosomal RNA.</text>
</comment>
<comment type="similarity">
    <text evidence="1">Belongs to the universal ribosomal protein uS19 family.</text>
</comment>
<evidence type="ECO:0000255" key="1">
    <source>
        <dbReference type="HAMAP-Rule" id="MF_00531"/>
    </source>
</evidence>
<evidence type="ECO:0000305" key="2"/>